<organism>
    <name type="scientific">Pseudomonas putida (strain ATCC 47054 / DSM 6125 / CFBP 8728 / NCIMB 11950 / KT2440)</name>
    <dbReference type="NCBI Taxonomy" id="160488"/>
    <lineage>
        <taxon>Bacteria</taxon>
        <taxon>Pseudomonadati</taxon>
        <taxon>Pseudomonadota</taxon>
        <taxon>Gammaproteobacteria</taxon>
        <taxon>Pseudomonadales</taxon>
        <taxon>Pseudomonadaceae</taxon>
        <taxon>Pseudomonas</taxon>
    </lineage>
</organism>
<proteinExistence type="inferred from homology"/>
<sequence length="210" mass="22704">MTLHLQAAGLACERDWRLLFEQLDFELGAGDMLQISGPNGSGKTSLLRLLAGLMQPTAGQILLGGKPLAEQRHALASALLWIGHAAGIKDLLTAEENLTWLCALHQPASREAIWAALEAVGLRGFEDVPCHTLSAGQQRRVALARLHLACPPLWILDEPFTALDKQGVAQLEAHLAAHCEQGGTVVLTTHHTLERKPSGYRELNLGQWAA</sequence>
<evidence type="ECO:0000255" key="1">
    <source>
        <dbReference type="HAMAP-Rule" id="MF_01707"/>
    </source>
</evidence>
<dbReference type="EC" id="7.6.2.5" evidence="1"/>
<dbReference type="EMBL" id="AE015451">
    <property type="protein sequence ID" value="AAN69906.1"/>
    <property type="molecule type" value="Genomic_DNA"/>
</dbReference>
<dbReference type="RefSeq" id="NP_746442.1">
    <property type="nucleotide sequence ID" value="NC_002947.4"/>
</dbReference>
<dbReference type="RefSeq" id="WP_003254385.1">
    <property type="nucleotide sequence ID" value="NZ_CP169744.1"/>
</dbReference>
<dbReference type="SMR" id="Q88EX5"/>
<dbReference type="STRING" id="160488.PP_4327"/>
<dbReference type="PaxDb" id="160488-PP_4327"/>
<dbReference type="GeneID" id="83678964"/>
<dbReference type="KEGG" id="ppu:PP_4327"/>
<dbReference type="PATRIC" id="fig|160488.4.peg.4601"/>
<dbReference type="eggNOG" id="COG4133">
    <property type="taxonomic scope" value="Bacteria"/>
</dbReference>
<dbReference type="HOGENOM" id="CLU_000604_1_2_6"/>
<dbReference type="OrthoDB" id="9800654at2"/>
<dbReference type="PhylomeDB" id="Q88EX5"/>
<dbReference type="BioCyc" id="PPUT160488:G1G01-4605-MONOMER"/>
<dbReference type="Proteomes" id="UP000000556">
    <property type="component" value="Chromosome"/>
</dbReference>
<dbReference type="GO" id="GO:0005886">
    <property type="term" value="C:plasma membrane"/>
    <property type="evidence" value="ECO:0007669"/>
    <property type="project" value="UniProtKB-SubCell"/>
</dbReference>
<dbReference type="GO" id="GO:0015439">
    <property type="term" value="F:ABC-type heme transporter activity"/>
    <property type="evidence" value="ECO:0007669"/>
    <property type="project" value="UniProtKB-EC"/>
</dbReference>
<dbReference type="GO" id="GO:0005524">
    <property type="term" value="F:ATP binding"/>
    <property type="evidence" value="ECO:0007669"/>
    <property type="project" value="UniProtKB-KW"/>
</dbReference>
<dbReference type="GO" id="GO:0016887">
    <property type="term" value="F:ATP hydrolysis activity"/>
    <property type="evidence" value="ECO:0007669"/>
    <property type="project" value="InterPro"/>
</dbReference>
<dbReference type="GO" id="GO:0017004">
    <property type="term" value="P:cytochrome complex assembly"/>
    <property type="evidence" value="ECO:0007669"/>
    <property type="project" value="UniProtKB-KW"/>
</dbReference>
<dbReference type="CDD" id="cd03231">
    <property type="entry name" value="ABC_CcmA_heme_exporter"/>
    <property type="match status" value="1"/>
</dbReference>
<dbReference type="Gene3D" id="3.40.50.300">
    <property type="entry name" value="P-loop containing nucleotide triphosphate hydrolases"/>
    <property type="match status" value="1"/>
</dbReference>
<dbReference type="InterPro" id="IPR003593">
    <property type="entry name" value="AAA+_ATPase"/>
</dbReference>
<dbReference type="InterPro" id="IPR003439">
    <property type="entry name" value="ABC_transporter-like_ATP-bd"/>
</dbReference>
<dbReference type="InterPro" id="IPR005895">
    <property type="entry name" value="ABC_transptr_haem_export_CcmA"/>
</dbReference>
<dbReference type="InterPro" id="IPR027417">
    <property type="entry name" value="P-loop_NTPase"/>
</dbReference>
<dbReference type="NCBIfam" id="TIGR01189">
    <property type="entry name" value="ccmA"/>
    <property type="match status" value="1"/>
</dbReference>
<dbReference type="NCBIfam" id="NF010061">
    <property type="entry name" value="PRK13538.1"/>
    <property type="match status" value="1"/>
</dbReference>
<dbReference type="PANTHER" id="PTHR43499">
    <property type="entry name" value="ABC TRANSPORTER I FAMILY MEMBER 1"/>
    <property type="match status" value="1"/>
</dbReference>
<dbReference type="PANTHER" id="PTHR43499:SF1">
    <property type="entry name" value="ABC TRANSPORTER I FAMILY MEMBER 1"/>
    <property type="match status" value="1"/>
</dbReference>
<dbReference type="Pfam" id="PF00005">
    <property type="entry name" value="ABC_tran"/>
    <property type="match status" value="1"/>
</dbReference>
<dbReference type="SMART" id="SM00382">
    <property type="entry name" value="AAA"/>
    <property type="match status" value="1"/>
</dbReference>
<dbReference type="SUPFAM" id="SSF52540">
    <property type="entry name" value="P-loop containing nucleoside triphosphate hydrolases"/>
    <property type="match status" value="1"/>
</dbReference>
<dbReference type="PROSITE" id="PS50893">
    <property type="entry name" value="ABC_TRANSPORTER_2"/>
    <property type="match status" value="1"/>
</dbReference>
<dbReference type="PROSITE" id="PS51243">
    <property type="entry name" value="CCMA"/>
    <property type="match status" value="1"/>
</dbReference>
<comment type="function">
    <text evidence="1">Part of the ABC transporter complex CcmAB involved in the biogenesis of c-type cytochromes; once thought to export heme, this seems not to be the case, but its exact role is uncertain. Responsible for energy coupling to the transport system.</text>
</comment>
<comment type="catalytic activity">
    <reaction evidence="1">
        <text>heme b(in) + ATP + H2O = heme b(out) + ADP + phosphate + H(+)</text>
        <dbReference type="Rhea" id="RHEA:19261"/>
        <dbReference type="ChEBI" id="CHEBI:15377"/>
        <dbReference type="ChEBI" id="CHEBI:15378"/>
        <dbReference type="ChEBI" id="CHEBI:30616"/>
        <dbReference type="ChEBI" id="CHEBI:43474"/>
        <dbReference type="ChEBI" id="CHEBI:60344"/>
        <dbReference type="ChEBI" id="CHEBI:456216"/>
        <dbReference type="EC" id="7.6.2.5"/>
    </reaction>
</comment>
<comment type="subunit">
    <text evidence="1">The complex is composed of two ATP-binding proteins (CcmA) and two transmembrane proteins (CcmB).</text>
</comment>
<comment type="subcellular location">
    <subcellularLocation>
        <location evidence="1">Cell inner membrane</location>
        <topology evidence="1">Peripheral membrane protein</topology>
    </subcellularLocation>
</comment>
<comment type="similarity">
    <text evidence="1">Belongs to the ABC transporter superfamily. CcmA exporter (TC 3.A.1.107) family.</text>
</comment>
<keyword id="KW-0067">ATP-binding</keyword>
<keyword id="KW-0997">Cell inner membrane</keyword>
<keyword id="KW-1003">Cell membrane</keyword>
<keyword id="KW-0201">Cytochrome c-type biogenesis</keyword>
<keyword id="KW-0472">Membrane</keyword>
<keyword id="KW-0547">Nucleotide-binding</keyword>
<keyword id="KW-1185">Reference proteome</keyword>
<keyword id="KW-1278">Translocase</keyword>
<keyword id="KW-0813">Transport</keyword>
<gene>
    <name evidence="1" type="primary">ccmA</name>
    <name type="ordered locus">PP_4327</name>
</gene>
<protein>
    <recommendedName>
        <fullName evidence="1">Cytochrome c biogenesis ATP-binding export protein CcmA</fullName>
        <ecNumber evidence="1">7.6.2.5</ecNumber>
    </recommendedName>
    <alternativeName>
        <fullName evidence="1">Heme exporter protein A</fullName>
    </alternativeName>
</protein>
<reference key="1">
    <citation type="journal article" date="2002" name="Environ. Microbiol.">
        <title>Complete genome sequence and comparative analysis of the metabolically versatile Pseudomonas putida KT2440.</title>
        <authorList>
            <person name="Nelson K.E."/>
            <person name="Weinel C."/>
            <person name="Paulsen I.T."/>
            <person name="Dodson R.J."/>
            <person name="Hilbert H."/>
            <person name="Martins dos Santos V.A.P."/>
            <person name="Fouts D.E."/>
            <person name="Gill S.R."/>
            <person name="Pop M."/>
            <person name="Holmes M."/>
            <person name="Brinkac L.M."/>
            <person name="Beanan M.J."/>
            <person name="DeBoy R.T."/>
            <person name="Daugherty S.C."/>
            <person name="Kolonay J.F."/>
            <person name="Madupu R."/>
            <person name="Nelson W.C."/>
            <person name="White O."/>
            <person name="Peterson J.D."/>
            <person name="Khouri H.M."/>
            <person name="Hance I."/>
            <person name="Chris Lee P."/>
            <person name="Holtzapple E.K."/>
            <person name="Scanlan D."/>
            <person name="Tran K."/>
            <person name="Moazzez A."/>
            <person name="Utterback T.R."/>
            <person name="Rizzo M."/>
            <person name="Lee K."/>
            <person name="Kosack D."/>
            <person name="Moestl D."/>
            <person name="Wedler H."/>
            <person name="Lauber J."/>
            <person name="Stjepandic D."/>
            <person name="Hoheisel J."/>
            <person name="Straetz M."/>
            <person name="Heim S."/>
            <person name="Kiewitz C."/>
            <person name="Eisen J.A."/>
            <person name="Timmis K.N."/>
            <person name="Duesterhoeft A."/>
            <person name="Tuemmler B."/>
            <person name="Fraser C.M."/>
        </authorList>
    </citation>
    <scope>NUCLEOTIDE SEQUENCE [LARGE SCALE GENOMIC DNA]</scope>
    <source>
        <strain>ATCC 47054 / DSM 6125 / CFBP 8728 / NCIMB 11950 / KT2440</strain>
    </source>
</reference>
<accession>Q88EX5</accession>
<feature type="chain" id="PRO_0000092198" description="Cytochrome c biogenesis ATP-binding export protein CcmA">
    <location>
        <begin position="1"/>
        <end position="210"/>
    </location>
</feature>
<feature type="domain" description="ABC transporter" evidence="1">
    <location>
        <begin position="3"/>
        <end position="205"/>
    </location>
</feature>
<feature type="binding site" evidence="1">
    <location>
        <begin position="37"/>
        <end position="44"/>
    </location>
    <ligand>
        <name>ATP</name>
        <dbReference type="ChEBI" id="CHEBI:30616"/>
    </ligand>
</feature>
<name>CCMA_PSEPK</name>